<sequence length="632" mass="69163">MTVPEIFDVIVIGGGHAGTEAALAAARIGQKTLLLSHNIETLGQMSCNPSIGGIGKGHLVKEIDALGGVMAEAADEAGIQFRILNSRKGPAVRATRAQADRVLYRQAIRQRLESQPNLWLFQQGVDDLVLEGERVAGVVTQLGIRFNARAVILTAGTFLAGLAHVGSANFQAGRAGDLPSNSLAGRLRELKLPVGRLKTGTPPRIDGRTIDYSAVAAQPGDAPVPVFSFMGNAASHPKQVSCWITHTNSQTHDIIRSGLDRSPLFSGAIEGIGPRYCPSIEDKVVRFSAKESHQIFLEPEGLTTHEVYPNGISTSLPFDMQVKLVRSIKGLENAHITRPGYAIEYDYFDPRALKSSLETRMIEGLFFAGQINGTTGYEEAAAQGLLAGINAALKTQDREPWCPRRDEAYLGVLVDDLITRGVTEPYRMFTSRAEYRLQLREDNADLRLTEVGRRLGVVNDARWVAFNIKLEAIAQEQNRLKTTWLSPKSLSETDALRVIGKNIEHECSLHDLLRRPNVSYAELMTLPGAGEPVVDLAAAEQVEIQAKYQGYIERQKDEVARNAYYEDIRLPQDLDYKTVRGLSNEVQQKLNQFKPETAGQASRISGITPAAISLLLVHVKRGFSSANTKKSA</sequence>
<evidence type="ECO:0000255" key="1">
    <source>
        <dbReference type="HAMAP-Rule" id="MF_00129"/>
    </source>
</evidence>
<evidence type="ECO:0000305" key="2"/>
<gene>
    <name evidence="1" type="primary">mnmG</name>
    <name evidence="1" type="synonym">gidA</name>
    <name type="ordered locus">Nmul_A2770</name>
</gene>
<name>MNMG_NITMU</name>
<accession>Q2Y5B4</accession>
<keyword id="KW-0963">Cytoplasm</keyword>
<keyword id="KW-0274">FAD</keyword>
<keyword id="KW-0285">Flavoprotein</keyword>
<keyword id="KW-0520">NAD</keyword>
<keyword id="KW-1185">Reference proteome</keyword>
<keyword id="KW-0819">tRNA processing</keyword>
<reference key="1">
    <citation type="submission" date="2005-08" db="EMBL/GenBank/DDBJ databases">
        <title>Complete sequence of chromosome 1 of Nitrosospira multiformis ATCC 25196.</title>
        <authorList>
            <person name="Copeland A."/>
            <person name="Lucas S."/>
            <person name="Lapidus A."/>
            <person name="Barry K."/>
            <person name="Detter J.C."/>
            <person name="Glavina T."/>
            <person name="Hammon N."/>
            <person name="Israni S."/>
            <person name="Pitluck S."/>
            <person name="Chain P."/>
            <person name="Malfatti S."/>
            <person name="Shin M."/>
            <person name="Vergez L."/>
            <person name="Schmutz J."/>
            <person name="Larimer F."/>
            <person name="Land M."/>
            <person name="Hauser L."/>
            <person name="Kyrpides N."/>
            <person name="Lykidis A."/>
            <person name="Richardson P."/>
        </authorList>
    </citation>
    <scope>NUCLEOTIDE SEQUENCE [LARGE SCALE GENOMIC DNA]</scope>
    <source>
        <strain>ATCC 25196 / NCIMB 11849 / C 71</strain>
    </source>
</reference>
<proteinExistence type="inferred from homology"/>
<protein>
    <recommendedName>
        <fullName evidence="1">tRNA uridine 5-carboxymethylaminomethyl modification enzyme MnmG</fullName>
    </recommendedName>
    <alternativeName>
        <fullName evidence="1">Glucose-inhibited division protein A</fullName>
    </alternativeName>
</protein>
<feature type="chain" id="PRO_0000345309" description="tRNA uridine 5-carboxymethylaminomethyl modification enzyme MnmG">
    <location>
        <begin position="1"/>
        <end position="632"/>
    </location>
</feature>
<feature type="binding site" evidence="1">
    <location>
        <begin position="13"/>
        <end position="18"/>
    </location>
    <ligand>
        <name>FAD</name>
        <dbReference type="ChEBI" id="CHEBI:57692"/>
    </ligand>
</feature>
<feature type="binding site" evidence="1">
    <location>
        <position position="125"/>
    </location>
    <ligand>
        <name>FAD</name>
        <dbReference type="ChEBI" id="CHEBI:57692"/>
    </ligand>
</feature>
<feature type="binding site" evidence="1">
    <location>
        <position position="180"/>
    </location>
    <ligand>
        <name>FAD</name>
        <dbReference type="ChEBI" id="CHEBI:57692"/>
    </ligand>
</feature>
<feature type="binding site" evidence="1">
    <location>
        <begin position="273"/>
        <end position="287"/>
    </location>
    <ligand>
        <name>NAD(+)</name>
        <dbReference type="ChEBI" id="CHEBI:57540"/>
    </ligand>
</feature>
<feature type="binding site" evidence="1">
    <location>
        <position position="370"/>
    </location>
    <ligand>
        <name>FAD</name>
        <dbReference type="ChEBI" id="CHEBI:57692"/>
    </ligand>
</feature>
<comment type="function">
    <text evidence="1">NAD-binding protein involved in the addition of a carboxymethylaminomethyl (cmnm) group at the wobble position (U34) of certain tRNAs, forming tRNA-cmnm(5)s(2)U34.</text>
</comment>
<comment type="cofactor">
    <cofactor evidence="1">
        <name>FAD</name>
        <dbReference type="ChEBI" id="CHEBI:57692"/>
    </cofactor>
</comment>
<comment type="subunit">
    <text evidence="1">Homodimer. Heterotetramer of two MnmE and two MnmG subunits.</text>
</comment>
<comment type="subcellular location">
    <subcellularLocation>
        <location evidence="1">Cytoplasm</location>
    </subcellularLocation>
</comment>
<comment type="similarity">
    <text evidence="1">Belongs to the MnmG family.</text>
</comment>
<comment type="sequence caution" evidence="2">
    <conflict type="erroneous initiation">
        <sequence resource="EMBL-CDS" id="ABB76057"/>
    </conflict>
</comment>
<dbReference type="EMBL" id="CP000103">
    <property type="protein sequence ID" value="ABB76057.1"/>
    <property type="status" value="ALT_INIT"/>
    <property type="molecule type" value="Genomic_DNA"/>
</dbReference>
<dbReference type="RefSeq" id="WP_011382042.1">
    <property type="nucleotide sequence ID" value="NC_007614.1"/>
</dbReference>
<dbReference type="SMR" id="Q2Y5B4"/>
<dbReference type="STRING" id="323848.Nmul_A2770"/>
<dbReference type="KEGG" id="nmu:Nmul_A2770"/>
<dbReference type="eggNOG" id="COG0445">
    <property type="taxonomic scope" value="Bacteria"/>
</dbReference>
<dbReference type="HOGENOM" id="CLU_007831_2_2_4"/>
<dbReference type="OrthoDB" id="9815560at2"/>
<dbReference type="Proteomes" id="UP000002718">
    <property type="component" value="Chromosome"/>
</dbReference>
<dbReference type="GO" id="GO:0005829">
    <property type="term" value="C:cytosol"/>
    <property type="evidence" value="ECO:0007669"/>
    <property type="project" value="TreeGrafter"/>
</dbReference>
<dbReference type="GO" id="GO:0050660">
    <property type="term" value="F:flavin adenine dinucleotide binding"/>
    <property type="evidence" value="ECO:0007669"/>
    <property type="project" value="UniProtKB-UniRule"/>
</dbReference>
<dbReference type="GO" id="GO:0030488">
    <property type="term" value="P:tRNA methylation"/>
    <property type="evidence" value="ECO:0007669"/>
    <property type="project" value="TreeGrafter"/>
</dbReference>
<dbReference type="GO" id="GO:0002098">
    <property type="term" value="P:tRNA wobble uridine modification"/>
    <property type="evidence" value="ECO:0007669"/>
    <property type="project" value="InterPro"/>
</dbReference>
<dbReference type="FunFam" id="1.10.10.1800:FF:000001">
    <property type="entry name" value="tRNA uridine 5-carboxymethylaminomethyl modification enzyme MnmG"/>
    <property type="match status" value="1"/>
</dbReference>
<dbReference type="FunFam" id="1.10.150.570:FF:000001">
    <property type="entry name" value="tRNA uridine 5-carboxymethylaminomethyl modification enzyme MnmG"/>
    <property type="match status" value="1"/>
</dbReference>
<dbReference type="FunFam" id="3.50.50.60:FF:000002">
    <property type="entry name" value="tRNA uridine 5-carboxymethylaminomethyl modification enzyme MnmG"/>
    <property type="match status" value="1"/>
</dbReference>
<dbReference type="FunFam" id="3.50.50.60:FF:000010">
    <property type="entry name" value="tRNA uridine 5-carboxymethylaminomethyl modification enzyme MnmG"/>
    <property type="match status" value="1"/>
</dbReference>
<dbReference type="Gene3D" id="3.50.50.60">
    <property type="entry name" value="FAD/NAD(P)-binding domain"/>
    <property type="match status" value="2"/>
</dbReference>
<dbReference type="Gene3D" id="1.10.150.570">
    <property type="entry name" value="GidA associated domain, C-terminal subdomain"/>
    <property type="match status" value="1"/>
</dbReference>
<dbReference type="Gene3D" id="1.10.10.1800">
    <property type="entry name" value="tRNA uridine 5-carboxymethylaminomethyl modification enzyme MnmG/GidA"/>
    <property type="match status" value="1"/>
</dbReference>
<dbReference type="HAMAP" id="MF_00129">
    <property type="entry name" value="MnmG_GidA"/>
    <property type="match status" value="1"/>
</dbReference>
<dbReference type="InterPro" id="IPR036188">
    <property type="entry name" value="FAD/NAD-bd_sf"/>
</dbReference>
<dbReference type="InterPro" id="IPR049312">
    <property type="entry name" value="GIDA_C_N"/>
</dbReference>
<dbReference type="InterPro" id="IPR004416">
    <property type="entry name" value="MnmG"/>
</dbReference>
<dbReference type="InterPro" id="IPR002218">
    <property type="entry name" value="MnmG-rel"/>
</dbReference>
<dbReference type="InterPro" id="IPR020595">
    <property type="entry name" value="MnmG-rel_CS"/>
</dbReference>
<dbReference type="InterPro" id="IPR026904">
    <property type="entry name" value="MnmG_C"/>
</dbReference>
<dbReference type="InterPro" id="IPR047001">
    <property type="entry name" value="MnmG_C_subdom"/>
</dbReference>
<dbReference type="InterPro" id="IPR044920">
    <property type="entry name" value="MnmG_C_subdom_sf"/>
</dbReference>
<dbReference type="InterPro" id="IPR040131">
    <property type="entry name" value="MnmG_N"/>
</dbReference>
<dbReference type="NCBIfam" id="TIGR00136">
    <property type="entry name" value="mnmG_gidA"/>
    <property type="match status" value="1"/>
</dbReference>
<dbReference type="PANTHER" id="PTHR11806">
    <property type="entry name" value="GLUCOSE INHIBITED DIVISION PROTEIN A"/>
    <property type="match status" value="1"/>
</dbReference>
<dbReference type="PANTHER" id="PTHR11806:SF0">
    <property type="entry name" value="PROTEIN MTO1 HOMOLOG, MITOCHONDRIAL"/>
    <property type="match status" value="1"/>
</dbReference>
<dbReference type="Pfam" id="PF01134">
    <property type="entry name" value="GIDA"/>
    <property type="match status" value="1"/>
</dbReference>
<dbReference type="Pfam" id="PF21680">
    <property type="entry name" value="GIDA_C_1st"/>
    <property type="match status" value="1"/>
</dbReference>
<dbReference type="Pfam" id="PF13932">
    <property type="entry name" value="SAM_GIDA_C"/>
    <property type="match status" value="1"/>
</dbReference>
<dbReference type="SMART" id="SM01228">
    <property type="entry name" value="GIDA_assoc_3"/>
    <property type="match status" value="1"/>
</dbReference>
<dbReference type="SUPFAM" id="SSF51905">
    <property type="entry name" value="FAD/NAD(P)-binding domain"/>
    <property type="match status" value="1"/>
</dbReference>
<dbReference type="PROSITE" id="PS01280">
    <property type="entry name" value="GIDA_1"/>
    <property type="match status" value="1"/>
</dbReference>
<dbReference type="PROSITE" id="PS01281">
    <property type="entry name" value="GIDA_2"/>
    <property type="match status" value="1"/>
</dbReference>
<organism>
    <name type="scientific">Nitrosospira multiformis (strain ATCC 25196 / NCIMB 11849 / C 71)</name>
    <dbReference type="NCBI Taxonomy" id="323848"/>
    <lineage>
        <taxon>Bacteria</taxon>
        <taxon>Pseudomonadati</taxon>
        <taxon>Pseudomonadota</taxon>
        <taxon>Betaproteobacteria</taxon>
        <taxon>Nitrosomonadales</taxon>
        <taxon>Nitrosomonadaceae</taxon>
        <taxon>Nitrosospira</taxon>
    </lineage>
</organism>